<organism>
    <name type="scientific">Mus musculus</name>
    <name type="common">Mouse</name>
    <dbReference type="NCBI Taxonomy" id="10090"/>
    <lineage>
        <taxon>Eukaryota</taxon>
        <taxon>Metazoa</taxon>
        <taxon>Chordata</taxon>
        <taxon>Craniata</taxon>
        <taxon>Vertebrata</taxon>
        <taxon>Euteleostomi</taxon>
        <taxon>Mammalia</taxon>
        <taxon>Eutheria</taxon>
        <taxon>Euarchontoglires</taxon>
        <taxon>Glires</taxon>
        <taxon>Rodentia</taxon>
        <taxon>Myomorpha</taxon>
        <taxon>Muroidea</taxon>
        <taxon>Muridae</taxon>
        <taxon>Murinae</taxon>
        <taxon>Mus</taxon>
        <taxon>Mus</taxon>
    </lineage>
</organism>
<protein>
    <recommendedName>
        <fullName>CASP8 and FADD-like apoptosis regulator</fullName>
    </recommendedName>
    <alternativeName>
        <fullName>Caspase homolog</fullName>
        <shortName>CASH</shortName>
    </alternativeName>
    <alternativeName>
        <fullName>Caspase-eight-related protein</fullName>
        <shortName>Casper</shortName>
    </alternativeName>
    <alternativeName>
        <fullName>Caspase-like apoptosis regulatory protein</fullName>
        <shortName>CLARP</shortName>
    </alternativeName>
    <alternativeName>
        <fullName>Cellular FLICE-like inhibitory protein</fullName>
        <shortName>c-FLIP</shortName>
    </alternativeName>
    <alternativeName>
        <fullName>FADD-like antiapoptotic molecule 1</fullName>
        <shortName>FLAME-1</shortName>
    </alternativeName>
    <alternativeName>
        <fullName>Inhibitor of FLICE</fullName>
        <shortName>I-FLICE</shortName>
    </alternativeName>
    <alternativeName>
        <fullName>MACH-related inducer of toxicity</fullName>
        <shortName>MRIT</shortName>
    </alternativeName>
    <alternativeName>
        <fullName>Usurpin</fullName>
    </alternativeName>
    <component>
        <recommendedName>
            <fullName>CASP8 and FADD-like apoptosis regulator subunit p43</fullName>
        </recommendedName>
    </component>
    <component>
        <recommendedName>
            <fullName>CASP8 and FADD-like apoptosis regulator subunit p12</fullName>
        </recommendedName>
    </component>
</protein>
<name>CFLAR_MOUSE</name>
<proteinExistence type="evidence at protein level"/>
<comment type="function">
    <text evidence="1 4 5">Apoptosis regulator protein which may function as a crucial link between cell survival and cell death pathways in mammalian cells. Acts as an inhibitor of TNFRSF6 mediated apoptosis. A proteolytic fragment (p43) is likely retained in the death-inducing signaling complex (DISC) thereby blocking further recruitment and processing of caspase-8 at the complex. Full length and shorter isoforms have been shown either to induce apoptosis or to reduce TNFRSF-triggered apoptosis. Lacks enzymatic (caspase) activity (By similarity).</text>
</comment>
<comment type="subunit">
    <text evidence="2 7">TNFRSF6 stimulation triggers recruitment to the death-inducing signaling complex (DISC) formed by TNFRSF6, FADD and CASP8 (By similarity). A proteolytic fragment (p43) stays associated with the DISC (By similarity). Interacts with RIPK1 (PubMed:31519887).</text>
</comment>
<comment type="alternative products">
    <event type="alternative splicing"/>
    <isoform>
        <id>O35732-1</id>
        <name>1</name>
        <name>FLIP-L</name>
        <name>CASH alpha</name>
        <sequence type="displayed"/>
    </isoform>
    <isoform>
        <id>O35732-2</id>
        <name>2</name>
        <name>FLIP-S</name>
        <name>CASH beta</name>
        <sequence type="described" ref="VSP_000842 VSP_000843"/>
    </isoform>
</comment>
<comment type="tissue specificity">
    <text>Highly expressed in heart.</text>
</comment>
<comment type="developmental stage">
    <text>At 9.5 and 10.5 dpc, highly expressed in developing heart.</text>
</comment>
<comment type="induction">
    <text>Isoform 1 but not isoform 2 is activated by BCR cross-linking in primary B-cells.</text>
</comment>
<comment type="domain">
    <text>The caspase domain lacks the active site residues involved in catalysis.</text>
</comment>
<comment type="PTM">
    <text evidence="6">Proteolytically processed by CASP8 generating subunits p43 and p12.</text>
</comment>
<comment type="similarity">
    <text evidence="9">Belongs to the peptidase C14A family.</text>
</comment>
<evidence type="ECO:0000250" key="1"/>
<evidence type="ECO:0000250" key="2">
    <source>
        <dbReference type="UniProtKB" id="O15519"/>
    </source>
</evidence>
<evidence type="ECO:0000255" key="3">
    <source>
        <dbReference type="PROSITE-ProRule" id="PRU00065"/>
    </source>
</evidence>
<evidence type="ECO:0000269" key="4">
    <source>
    </source>
</evidence>
<evidence type="ECO:0000269" key="5">
    <source>
    </source>
</evidence>
<evidence type="ECO:0000269" key="6">
    <source>
    </source>
</evidence>
<evidence type="ECO:0000269" key="7">
    <source>
    </source>
</evidence>
<evidence type="ECO:0000303" key="8">
    <source>
    </source>
</evidence>
<evidence type="ECO:0000305" key="9"/>
<accession>O35732</accession>
<accession>D3Z0W6</accession>
<accession>O35707</accession>
<accession>O35733</accession>
<gene>
    <name type="primary">Cflar</name>
    <name type="synonym">Cash</name>
</gene>
<reference key="1">
    <citation type="journal article" date="1997" name="J. Biol. Chem.">
        <title>CASH, a novel caspase homologue with death effector domains.</title>
        <authorList>
            <person name="Goltsev Y.V."/>
            <person name="Kovalenko A.V."/>
            <person name="Arnold E."/>
            <person name="Varfolomeev E.E."/>
            <person name="Brodianskii V.M."/>
            <person name="Wallach D."/>
        </authorList>
    </citation>
    <scope>NUCLEOTIDE SEQUENCE [MRNA] (ISOFORMS 1 AND 2)</scope>
    <source>
        <tissue>Liver</tissue>
        <tissue>Skin fibroblast</tissue>
    </source>
</reference>
<reference key="2">
    <citation type="journal article" date="1997" name="Nature">
        <title>Inhibition of death receptor signals by cellular FLIP.</title>
        <authorList>
            <person name="Irmler M."/>
            <person name="Thome M."/>
            <person name="Hahne M."/>
            <person name="Schneider P."/>
            <person name="Hofmann K."/>
            <person name="Steiner V."/>
            <person name="Bodmer J.-L."/>
            <person name="Schroeter M."/>
            <person name="Burns K."/>
            <person name="Mattmann C."/>
            <person name="Rimoldi D."/>
            <person name="French L.E."/>
            <person name="Tschopp J."/>
        </authorList>
    </citation>
    <scope>NUCLEOTIDE SEQUENCE [MRNA] (ISOFORM 1)</scope>
    <source>
        <tissue>Heart</tissue>
    </source>
</reference>
<reference key="3">
    <citation type="journal article" date="2009" name="PLoS Biol.">
        <title>Lineage-specific biology revealed by a finished genome assembly of the mouse.</title>
        <authorList>
            <person name="Church D.M."/>
            <person name="Goodstadt L."/>
            <person name="Hillier L.W."/>
            <person name="Zody M.C."/>
            <person name="Goldstein S."/>
            <person name="She X."/>
            <person name="Bult C.J."/>
            <person name="Agarwala R."/>
            <person name="Cherry J.L."/>
            <person name="DiCuccio M."/>
            <person name="Hlavina W."/>
            <person name="Kapustin Y."/>
            <person name="Meric P."/>
            <person name="Maglott D."/>
            <person name="Birtle Z."/>
            <person name="Marques A.C."/>
            <person name="Graves T."/>
            <person name="Zhou S."/>
            <person name="Teague B."/>
            <person name="Potamousis K."/>
            <person name="Churas C."/>
            <person name="Place M."/>
            <person name="Herschleb J."/>
            <person name="Runnheim R."/>
            <person name="Forrest D."/>
            <person name="Amos-Landgraf J."/>
            <person name="Schwartz D.C."/>
            <person name="Cheng Z."/>
            <person name="Lindblad-Toh K."/>
            <person name="Eichler E.E."/>
            <person name="Ponting C.P."/>
        </authorList>
    </citation>
    <scope>NUCLEOTIDE SEQUENCE [LARGE SCALE GENOMIC DNA]</scope>
    <source>
        <strain>C57BL/6J</strain>
    </source>
</reference>
<reference key="4">
    <citation type="journal article" date="2000" name="Immunity">
        <title>Requirement for Casper (c-FLIP) in regulation of death receptor-induced apoptosis and embryonic development.</title>
        <authorList>
            <person name="Yeh W.-C."/>
            <person name="Itie A."/>
            <person name="Elia A.J."/>
            <person name="Ng M."/>
            <person name="Shu H.-B."/>
            <person name="Wakeham A."/>
            <person name="Mirtsos C."/>
            <person name="Suzuki N."/>
            <person name="Bonnard M."/>
            <person name="Goeddel D.V."/>
            <person name="Mak T.W."/>
        </authorList>
    </citation>
    <scope>FUNCTION</scope>
</reference>
<reference key="5">
    <citation type="journal article" date="2000" name="Eur. J. Immunol.">
        <title>Inhibition of Fas-mediated apoptosis by the B cell antigen receptor through c-FLIP.</title>
        <authorList>
            <person name="Wang J."/>
            <person name="Lobito A.A."/>
            <person name="Shen F."/>
            <person name="Hornung F."/>
            <person name="Winoto A."/>
            <person name="Lenardo M.J."/>
        </authorList>
    </citation>
    <scope>FUNCTION</scope>
</reference>
<reference key="6">
    <citation type="journal article" date="2019" name="Nat. Commun.">
        <title>K63-linked ubiquitination regulates RIPK1 kinase activity to prevent cell death during embryogenesis and inflammation.</title>
        <authorList>
            <person name="Tang Y."/>
            <person name="Tu H."/>
            <person name="Zhang J."/>
            <person name="Zhao X."/>
            <person name="Wang Y."/>
            <person name="Qin J."/>
            <person name="Lin X."/>
        </authorList>
    </citation>
    <scope>INTERACTION WITH RIPK1</scope>
</reference>
<reference key="7">
    <citation type="journal article" date="2019" name="Nature">
        <title>Cleavage of RIPK1 by caspase-8 is crucial for limiting apoptosis and necroptosis.</title>
        <authorList>
            <person name="Newton K."/>
            <person name="Wickliffe K.E."/>
            <person name="Dugger D.L."/>
            <person name="Maltzman A."/>
            <person name="Roose-Girma M."/>
            <person name="Dohse M."/>
            <person name="Komuves L."/>
            <person name="Webster J.D."/>
            <person name="Dixit V.M."/>
        </authorList>
    </citation>
    <scope>PROTEOLYTIC PROCESSING</scope>
    <scope>MUTAGENESIS OF ASP-371 AND ASP-377</scope>
    <scope>SITE</scope>
</reference>
<feature type="chain" id="PRO_0000004680" description="CASP8 and FADD-like apoptosis regulator subunit p43" evidence="6">
    <location>
        <begin position="1"/>
        <end position="377"/>
    </location>
</feature>
<feature type="chain" id="PRO_0000004681" description="CASP8 and FADD-like apoptosis regulator subunit p12" evidence="6">
    <location>
        <begin position="378"/>
        <end position="481"/>
    </location>
</feature>
<feature type="domain" description="DED 1" evidence="3">
    <location>
        <begin position="6"/>
        <end position="78"/>
    </location>
</feature>
<feature type="domain" description="DED 2" evidence="3">
    <location>
        <begin position="97"/>
        <end position="172"/>
    </location>
</feature>
<feature type="region of interest" description="Interaction with CASP8 propeptide" evidence="2">
    <location>
        <begin position="6"/>
        <end position="307"/>
    </location>
</feature>
<feature type="region of interest" description="Interaction with FADD" evidence="2">
    <location>
        <begin position="6"/>
        <end position="229"/>
    </location>
</feature>
<feature type="region of interest" description="Interaction with CASP8" evidence="2">
    <location>
        <begin position="6"/>
        <end position="200"/>
    </location>
</feature>
<feature type="region of interest" description="Interaction with TRAF1 and TRAF2" evidence="2">
    <location>
        <begin position="197"/>
        <end position="481"/>
    </location>
</feature>
<feature type="region of interest" description="Interaction with CASP3" evidence="2">
    <location>
        <begin position="197"/>
        <end position="436"/>
    </location>
</feature>
<feature type="region of interest" description="Interaction with CASP8 subunits p18 and p10" evidence="2">
    <location>
        <begin position="219"/>
        <end position="481"/>
    </location>
</feature>
<feature type="region of interest" description="Caspase">
    <location>
        <begin position="265"/>
        <end position="360"/>
    </location>
</feature>
<feature type="region of interest" description="Interaction with CASP8" evidence="2">
    <location>
        <begin position="372"/>
        <end position="481"/>
    </location>
</feature>
<feature type="site" description="Cleavage; by CASP8" evidence="6">
    <location>
        <begin position="371"/>
        <end position="372"/>
    </location>
</feature>
<feature type="site" description="Cleavage; by CASP8" evidence="6">
    <location>
        <begin position="377"/>
        <end position="378"/>
    </location>
</feature>
<feature type="splice variant" id="VSP_000842" description="In isoform 2." evidence="8">
    <original>LQNGRSKEPRF</original>
    <variation>VSLEPVYGVPA</variation>
    <location>
        <begin position="205"/>
        <end position="215"/>
    </location>
</feature>
<feature type="splice variant" id="VSP_000843" description="In isoform 2." evidence="8">
    <location>
        <begin position="216"/>
        <end position="481"/>
    </location>
</feature>
<feature type="mutagenesis site" description="Loss of CASP8-mediated cleavage; when associated with A-377." evidence="6">
    <original>D</original>
    <variation>A</variation>
    <location>
        <position position="371"/>
    </location>
</feature>
<feature type="mutagenesis site" description="Loss of CASP8-mediated cleavage; when associated with A-371." evidence="6">
    <original>D</original>
    <variation>A</variation>
    <location>
        <position position="377"/>
    </location>
</feature>
<feature type="sequence conflict" description="In Ref. 1; CAA74369/CAA74368." evidence="9" ref="1">
    <original>T</original>
    <variation>TRIT</variation>
    <location>
        <position position="121"/>
    </location>
</feature>
<dbReference type="EMBL" id="Y14041">
    <property type="protein sequence ID" value="CAA74368.1"/>
    <property type="molecule type" value="mRNA"/>
</dbReference>
<dbReference type="EMBL" id="Y14042">
    <property type="protein sequence ID" value="CAA74369.1"/>
    <property type="molecule type" value="mRNA"/>
</dbReference>
<dbReference type="EMBL" id="U97076">
    <property type="protein sequence ID" value="AAC53281.1"/>
    <property type="molecule type" value="mRNA"/>
</dbReference>
<dbReference type="EMBL" id="AC112968">
    <property type="status" value="NOT_ANNOTATED_CDS"/>
    <property type="molecule type" value="Genomic_DNA"/>
</dbReference>
<dbReference type="CCDS" id="CCDS14978.1">
    <molecule id="O35732-1"/>
</dbReference>
<dbReference type="CCDS" id="CCDS35582.1">
    <molecule id="O35732-2"/>
</dbReference>
<dbReference type="RefSeq" id="NP_001276633.1">
    <molecule id="O35732-1"/>
    <property type="nucleotide sequence ID" value="NM_001289704.3"/>
</dbReference>
<dbReference type="RefSeq" id="NP_033935.2">
    <molecule id="O35732-2"/>
    <property type="nucleotide sequence ID" value="NM_009805.4"/>
</dbReference>
<dbReference type="RefSeq" id="NP_997536.1">
    <molecule id="O35732-1"/>
    <property type="nucleotide sequence ID" value="NM_207653.6"/>
</dbReference>
<dbReference type="RefSeq" id="XP_006495698.1">
    <molecule id="O35732-1"/>
    <property type="nucleotide sequence ID" value="XM_006495635.5"/>
</dbReference>
<dbReference type="RefSeq" id="XP_011236722.1">
    <molecule id="O35732-1"/>
    <property type="nucleotide sequence ID" value="XM_011238420.4"/>
</dbReference>
<dbReference type="RefSeq" id="XP_011236723.1">
    <molecule id="O35732-1"/>
    <property type="nucleotide sequence ID" value="XM_011238421.4"/>
</dbReference>
<dbReference type="RefSeq" id="XP_011236724.1">
    <molecule id="O35732-1"/>
    <property type="nucleotide sequence ID" value="XM_011238422.1"/>
</dbReference>
<dbReference type="RefSeq" id="XP_011236725.1">
    <molecule id="O35732-1"/>
    <property type="nucleotide sequence ID" value="XM_011238423.4"/>
</dbReference>
<dbReference type="RefSeq" id="XP_017169048.1">
    <property type="nucleotide sequence ID" value="XM_017313559.1"/>
</dbReference>
<dbReference type="RefSeq" id="XP_030100848.1">
    <molecule id="O35732-1"/>
    <property type="nucleotide sequence ID" value="XM_030244988.2"/>
</dbReference>
<dbReference type="SMR" id="O35732"/>
<dbReference type="BioGRID" id="198686">
    <property type="interactions" value="10"/>
</dbReference>
<dbReference type="FunCoup" id="O35732">
    <property type="interactions" value="646"/>
</dbReference>
<dbReference type="IntAct" id="O35732">
    <property type="interactions" value="2"/>
</dbReference>
<dbReference type="STRING" id="10090.ENSMUSP00000109952"/>
<dbReference type="MEROPS" id="C14.974"/>
<dbReference type="iPTMnet" id="O35732"/>
<dbReference type="PhosphoSitePlus" id="O35732"/>
<dbReference type="PaxDb" id="10090-ENSMUSP00000109952"/>
<dbReference type="ProteomicsDB" id="281547">
    <molecule id="O35732-1"/>
</dbReference>
<dbReference type="ProteomicsDB" id="281548">
    <molecule id="O35732-2"/>
</dbReference>
<dbReference type="Antibodypedia" id="19934">
    <property type="antibodies" value="954 antibodies from 44 providers"/>
</dbReference>
<dbReference type="DNASU" id="12633"/>
<dbReference type="Ensembl" id="ENSMUST00000069333.8">
    <molecule id="O35732-1"/>
    <property type="protein sequence ID" value="ENSMUSP00000065107.8"/>
    <property type="gene ID" value="ENSMUSG00000026031.16"/>
</dbReference>
<dbReference type="Ensembl" id="ENSMUST00000114309.8">
    <molecule id="O35732-2"/>
    <property type="protein sequence ID" value="ENSMUSP00000109948.2"/>
    <property type="gene ID" value="ENSMUSG00000026031.16"/>
</dbReference>
<dbReference type="Ensembl" id="ENSMUST00000114313.8">
    <molecule id="O35732-1"/>
    <property type="protein sequence ID" value="ENSMUSP00000109952.2"/>
    <property type="gene ID" value="ENSMUSG00000026031.16"/>
</dbReference>
<dbReference type="GeneID" id="12633"/>
<dbReference type="KEGG" id="mmu:12633"/>
<dbReference type="AGR" id="MGI:1336166"/>
<dbReference type="CTD" id="8837"/>
<dbReference type="MGI" id="MGI:1336166">
    <property type="gene designation" value="Cflar"/>
</dbReference>
<dbReference type="VEuPathDB" id="HostDB:ENSMUSG00000026031"/>
<dbReference type="eggNOG" id="KOG3573">
    <property type="taxonomic scope" value="Eukaryota"/>
</dbReference>
<dbReference type="GeneTree" id="ENSGT00530000064199"/>
<dbReference type="InParanoid" id="O35732"/>
<dbReference type="OMA" id="MPQHRDY"/>
<dbReference type="OrthoDB" id="8816507at2759"/>
<dbReference type="PhylomeDB" id="O35732"/>
<dbReference type="Reactome" id="R-MMU-3371378">
    <property type="pathway name" value="Regulation by c-FLIP"/>
</dbReference>
<dbReference type="Reactome" id="R-MMU-5218900">
    <property type="pathway name" value="CASP8 activity is inhibited"/>
</dbReference>
<dbReference type="Reactome" id="R-MMU-5357905">
    <property type="pathway name" value="Regulation of TNFR1 signaling"/>
</dbReference>
<dbReference type="Reactome" id="R-MMU-69416">
    <property type="pathway name" value="Dimerization of procaspase-8"/>
</dbReference>
<dbReference type="Reactome" id="R-MMU-75158">
    <property type="pathway name" value="TRAIL signaling"/>
</dbReference>
<dbReference type="BioGRID-ORCS" id="12633">
    <property type="hits" value="34 hits in 76 CRISPR screens"/>
</dbReference>
<dbReference type="ChiTaRS" id="Cflar">
    <property type="organism name" value="mouse"/>
</dbReference>
<dbReference type="PRO" id="PR:O35732"/>
<dbReference type="Proteomes" id="UP000000589">
    <property type="component" value="Chromosome 1"/>
</dbReference>
<dbReference type="RNAct" id="O35732">
    <property type="molecule type" value="protein"/>
</dbReference>
<dbReference type="Bgee" id="ENSMUSG00000026031">
    <property type="expression patterns" value="Expressed in granulocyte and 270 other cell types or tissues"/>
</dbReference>
<dbReference type="ExpressionAtlas" id="O35732">
    <property type="expression patterns" value="baseline and differential"/>
</dbReference>
<dbReference type="GO" id="GO:0005737">
    <property type="term" value="C:cytoplasm"/>
    <property type="evidence" value="ECO:0000314"/>
    <property type="project" value="MGI"/>
</dbReference>
<dbReference type="GO" id="GO:0004197">
    <property type="term" value="F:cysteine-type endopeptidase activity"/>
    <property type="evidence" value="ECO:0007669"/>
    <property type="project" value="InterPro"/>
</dbReference>
<dbReference type="GO" id="GO:0016504">
    <property type="term" value="F:peptidase activator activity"/>
    <property type="evidence" value="ECO:0000314"/>
    <property type="project" value="MGI"/>
</dbReference>
<dbReference type="GO" id="GO:0006915">
    <property type="term" value="P:apoptotic process"/>
    <property type="evidence" value="ECO:0000315"/>
    <property type="project" value="MGI"/>
</dbReference>
<dbReference type="GO" id="GO:0070266">
    <property type="term" value="P:necroptotic process"/>
    <property type="evidence" value="ECO:0000316"/>
    <property type="project" value="MGI"/>
</dbReference>
<dbReference type="GO" id="GO:0043066">
    <property type="term" value="P:negative regulation of apoptotic process"/>
    <property type="evidence" value="ECO:0000315"/>
    <property type="project" value="MGI"/>
</dbReference>
<dbReference type="GO" id="GO:2001237">
    <property type="term" value="P:negative regulation of extrinsic apoptotic signaling pathway"/>
    <property type="evidence" value="ECO:0000316"/>
    <property type="project" value="MGI"/>
</dbReference>
<dbReference type="GO" id="GO:1902042">
    <property type="term" value="P:negative regulation of extrinsic apoptotic signaling pathway via death domain receptors"/>
    <property type="evidence" value="ECO:0000266"/>
    <property type="project" value="MGI"/>
</dbReference>
<dbReference type="GO" id="GO:1901740">
    <property type="term" value="P:negative regulation of myoblast fusion"/>
    <property type="evidence" value="ECO:0000315"/>
    <property type="project" value="BHF-UCL"/>
</dbReference>
<dbReference type="GO" id="GO:0060546">
    <property type="term" value="P:negative regulation of necroptotic process"/>
    <property type="evidence" value="ECO:0000316"/>
    <property type="project" value="MGI"/>
</dbReference>
<dbReference type="GO" id="GO:0006508">
    <property type="term" value="P:proteolysis"/>
    <property type="evidence" value="ECO:0007669"/>
    <property type="project" value="InterPro"/>
</dbReference>
<dbReference type="GO" id="GO:0014842">
    <property type="term" value="P:regulation of skeletal muscle satellite cell proliferation"/>
    <property type="evidence" value="ECO:0000315"/>
    <property type="project" value="BHF-UCL"/>
</dbReference>
<dbReference type="GO" id="GO:0009617">
    <property type="term" value="P:response to bacterium"/>
    <property type="evidence" value="ECO:0000270"/>
    <property type="project" value="MGI"/>
</dbReference>
<dbReference type="GO" id="GO:0014732">
    <property type="term" value="P:skeletal muscle atrophy"/>
    <property type="evidence" value="ECO:0000315"/>
    <property type="project" value="BHF-UCL"/>
</dbReference>
<dbReference type="GO" id="GO:0007519">
    <property type="term" value="P:skeletal muscle tissue development"/>
    <property type="evidence" value="ECO:0000315"/>
    <property type="project" value="BHF-UCL"/>
</dbReference>
<dbReference type="GO" id="GO:0043403">
    <property type="term" value="P:skeletal muscle tissue regeneration"/>
    <property type="evidence" value="ECO:0000315"/>
    <property type="project" value="BHF-UCL"/>
</dbReference>
<dbReference type="GO" id="GO:0014866">
    <property type="term" value="P:skeletal myofibril assembly"/>
    <property type="evidence" value="ECO:0000315"/>
    <property type="project" value="BHF-UCL"/>
</dbReference>
<dbReference type="CDD" id="cd00032">
    <property type="entry name" value="CASc"/>
    <property type="match status" value="1"/>
</dbReference>
<dbReference type="CDD" id="cd08337">
    <property type="entry name" value="DED_c-FLIP_r1"/>
    <property type="match status" value="1"/>
</dbReference>
<dbReference type="CDD" id="cd08340">
    <property type="entry name" value="DED_c-FLIP_r2"/>
    <property type="match status" value="1"/>
</dbReference>
<dbReference type="FunFam" id="1.10.533.10:FF:000020">
    <property type="entry name" value="CASP8 and FADD like apoptosis regulator"/>
    <property type="match status" value="1"/>
</dbReference>
<dbReference type="FunFam" id="1.10.533.10:FF:000016">
    <property type="entry name" value="CASP8 and FADD-like apoptosis regulator"/>
    <property type="match status" value="1"/>
</dbReference>
<dbReference type="Gene3D" id="3.40.50.1460">
    <property type="match status" value="1"/>
</dbReference>
<dbReference type="Gene3D" id="1.10.533.10">
    <property type="entry name" value="Death Domain, Fas"/>
    <property type="match status" value="2"/>
</dbReference>
<dbReference type="InterPro" id="IPR029030">
    <property type="entry name" value="Caspase-like_dom_sf"/>
</dbReference>
<dbReference type="InterPro" id="IPR011029">
    <property type="entry name" value="DEATH-like_dom_sf"/>
</dbReference>
<dbReference type="InterPro" id="IPR001875">
    <property type="entry name" value="DED_dom"/>
</dbReference>
<dbReference type="InterPro" id="IPR011600">
    <property type="entry name" value="Pept_C14_caspase"/>
</dbReference>
<dbReference type="InterPro" id="IPR001309">
    <property type="entry name" value="Pept_C14_p20"/>
</dbReference>
<dbReference type="InterPro" id="IPR015917">
    <property type="entry name" value="Pept_C14A"/>
</dbReference>
<dbReference type="PANTHER" id="PTHR48169:SF3">
    <property type="entry name" value="CASP8 AND FADD LIKE APOPTOSIS REGULATOR"/>
    <property type="match status" value="1"/>
</dbReference>
<dbReference type="PANTHER" id="PTHR48169">
    <property type="entry name" value="DED DOMAIN-CONTAINING PROTEIN"/>
    <property type="match status" value="1"/>
</dbReference>
<dbReference type="Pfam" id="PF01335">
    <property type="entry name" value="DED"/>
    <property type="match status" value="2"/>
</dbReference>
<dbReference type="Pfam" id="PF00656">
    <property type="entry name" value="Peptidase_C14"/>
    <property type="match status" value="1"/>
</dbReference>
<dbReference type="SMART" id="SM00115">
    <property type="entry name" value="CASc"/>
    <property type="match status" value="1"/>
</dbReference>
<dbReference type="SMART" id="SM00031">
    <property type="entry name" value="DED"/>
    <property type="match status" value="2"/>
</dbReference>
<dbReference type="SUPFAM" id="SSF52129">
    <property type="entry name" value="Caspase-like"/>
    <property type="match status" value="1"/>
</dbReference>
<dbReference type="SUPFAM" id="SSF47986">
    <property type="entry name" value="DEATH domain"/>
    <property type="match status" value="2"/>
</dbReference>
<dbReference type="PROSITE" id="PS50208">
    <property type="entry name" value="CASPASE_P20"/>
    <property type="match status" value="1"/>
</dbReference>
<dbReference type="PROSITE" id="PS50168">
    <property type="entry name" value="DED"/>
    <property type="match status" value="2"/>
</dbReference>
<sequence>MAQSPVSAEVIHQVEECLDEDEKEMMLFLCRDVTENLAAPNVRDLLDSLSERGQLSFATLAELLYRVRRFDLLKRILKTDKATVEDHLRRNPHLVSDYRVLLMEIGESLDQNDVSSLVFLTRDYTGRGKIAKDKSFLDLVIELEKLNLIASDQLNLLEKCLKNIHRIDLNTKIQKYTQSSQGARSNMNTLQASLPKLSIKYNSRLQNGRSKEPRFVEYRDSQRTLVKTSIQESGAFLPPHIREETYRMQSKPLGICLIIDCIGNDTKYLQETFTSLGYHIQLFLFPKSHDITQIVRRYASMAQHQDYDSFACVLVSLGGSQSMMGRDQVHSGFSLDHVKNMFTGDTCPSLRGKPKLFFIQNYESLGSQLEDSSLEVDGPSIKNVDSKPLQPRHCTTHPEADIFWSLCTADVSHLEKPSSSSSVYLQKLSQQLKQGRRRPLVDLHVELMDKVYAWNSGVSSKEKYSLSLQHTLRKKLILAPT</sequence>
<keyword id="KW-0025">Alternative splicing</keyword>
<keyword id="KW-0053">Apoptosis</keyword>
<keyword id="KW-1185">Reference proteome</keyword>
<keyword id="KW-0677">Repeat</keyword>